<comment type="function">
    <text evidence="1">Has a glutathione-disulfide oxidoreductase activity in the presence of NADPH and glutathione reductase. Reduces low molecular weight disulfides and proteins (By similarity).</text>
</comment>
<comment type="subcellular location">
    <subcellularLocation>
        <location evidence="1">Cytoplasm</location>
    </subcellularLocation>
</comment>
<comment type="alternative products">
    <event type="alternative splicing"/>
    <isoform>
        <id>Q9FNE2-1</id>
        <name>1</name>
        <sequence type="displayed"/>
    </isoform>
    <text>A number of isoforms are produced. According to EST sequences.</text>
</comment>
<comment type="similarity">
    <text evidence="3">Belongs to the glutaredoxin family. CPYC subfamily.</text>
</comment>
<gene>
    <name type="primary">GRXC2</name>
    <name type="synonym">GRX370</name>
    <name type="ordered locus">At5g40370</name>
    <name type="ORF">MPO12.80</name>
</gene>
<dbReference type="EMBL" id="AB006702">
    <property type="protein sequence ID" value="BAB11592.1"/>
    <property type="molecule type" value="Genomic_DNA"/>
</dbReference>
<dbReference type="EMBL" id="CP002688">
    <property type="protein sequence ID" value="AED94538.1"/>
    <property type="molecule type" value="Genomic_DNA"/>
</dbReference>
<dbReference type="EMBL" id="AY064153">
    <property type="protein sequence ID" value="AAL36059.1"/>
    <property type="molecule type" value="mRNA"/>
</dbReference>
<dbReference type="EMBL" id="AY072307">
    <property type="protein sequence ID" value="AAL61914.1"/>
    <property type="molecule type" value="mRNA"/>
</dbReference>
<dbReference type="EMBL" id="AY097411">
    <property type="protein sequence ID" value="AAM19927.1"/>
    <property type="molecule type" value="mRNA"/>
</dbReference>
<dbReference type="EMBL" id="AY114546">
    <property type="protein sequence ID" value="AAM47865.1"/>
    <property type="molecule type" value="mRNA"/>
</dbReference>
<dbReference type="EMBL" id="AY086319">
    <property type="protein sequence ID" value="AAM64389.1"/>
    <property type="molecule type" value="mRNA"/>
</dbReference>
<dbReference type="RefSeq" id="NP_198853.1">
    <molecule id="Q9FNE2-1"/>
    <property type="nucleotide sequence ID" value="NM_123401.4"/>
</dbReference>
<dbReference type="SMR" id="Q9FNE2"/>
<dbReference type="FunCoup" id="Q9FNE2">
    <property type="interactions" value="1140"/>
</dbReference>
<dbReference type="STRING" id="3702.Q9FNE2"/>
<dbReference type="iPTMnet" id="Q9FNE2"/>
<dbReference type="PaxDb" id="3702-AT5G40370.2"/>
<dbReference type="ProteomicsDB" id="222251">
    <molecule id="Q9FNE2-1"/>
</dbReference>
<dbReference type="EnsemblPlants" id="AT5G40370.1">
    <molecule id="Q9FNE2-1"/>
    <property type="protein sequence ID" value="AT5G40370.1"/>
    <property type="gene ID" value="AT5G40370"/>
</dbReference>
<dbReference type="GeneID" id="834035"/>
<dbReference type="Gramene" id="AT5G40370.1">
    <molecule id="Q9FNE2-1"/>
    <property type="protein sequence ID" value="AT5G40370.1"/>
    <property type="gene ID" value="AT5G40370"/>
</dbReference>
<dbReference type="KEGG" id="ath:AT5G40370"/>
<dbReference type="Araport" id="AT5G40370"/>
<dbReference type="TAIR" id="AT5G40370">
    <property type="gene designation" value="GRXC2"/>
</dbReference>
<dbReference type="eggNOG" id="KOG1752">
    <property type="taxonomic scope" value="Eukaryota"/>
</dbReference>
<dbReference type="HOGENOM" id="CLU_026126_7_2_1"/>
<dbReference type="InParanoid" id="Q9FNE2"/>
<dbReference type="OMA" id="IYTSPLC"/>
<dbReference type="OrthoDB" id="418495at2759"/>
<dbReference type="PhylomeDB" id="Q9FNE2"/>
<dbReference type="PRO" id="PR:Q9FNE2"/>
<dbReference type="Proteomes" id="UP000006548">
    <property type="component" value="Chromosome 5"/>
</dbReference>
<dbReference type="ExpressionAtlas" id="Q9FNE2">
    <property type="expression patterns" value="baseline and differential"/>
</dbReference>
<dbReference type="GO" id="GO:0005737">
    <property type="term" value="C:cytoplasm"/>
    <property type="evidence" value="ECO:0007669"/>
    <property type="project" value="UniProtKB-SubCell"/>
</dbReference>
<dbReference type="CDD" id="cd03419">
    <property type="entry name" value="GRX_GRXh_1_2_like"/>
    <property type="match status" value="1"/>
</dbReference>
<dbReference type="FunFam" id="3.40.30.10:FF:000093">
    <property type="entry name" value="Glutaredoxin 2"/>
    <property type="match status" value="1"/>
</dbReference>
<dbReference type="Gene3D" id="3.40.30.10">
    <property type="entry name" value="Glutaredoxin"/>
    <property type="match status" value="1"/>
</dbReference>
<dbReference type="InterPro" id="IPR011767">
    <property type="entry name" value="GLR_AS"/>
</dbReference>
<dbReference type="InterPro" id="IPR002109">
    <property type="entry name" value="Glutaredoxin"/>
</dbReference>
<dbReference type="InterPro" id="IPR011899">
    <property type="entry name" value="Glutaredoxin_euk/vir"/>
</dbReference>
<dbReference type="InterPro" id="IPR014025">
    <property type="entry name" value="Glutaredoxin_subgr"/>
</dbReference>
<dbReference type="InterPro" id="IPR036249">
    <property type="entry name" value="Thioredoxin-like_sf"/>
</dbReference>
<dbReference type="NCBIfam" id="TIGR02180">
    <property type="entry name" value="GRX_euk"/>
    <property type="match status" value="1"/>
</dbReference>
<dbReference type="PANTHER" id="PTHR45694">
    <property type="entry name" value="GLUTAREDOXIN 2"/>
    <property type="match status" value="1"/>
</dbReference>
<dbReference type="PANTHER" id="PTHR45694:SF14">
    <property type="entry name" value="GLUTAREDOXIN-C2"/>
    <property type="match status" value="1"/>
</dbReference>
<dbReference type="Pfam" id="PF00462">
    <property type="entry name" value="Glutaredoxin"/>
    <property type="match status" value="1"/>
</dbReference>
<dbReference type="PRINTS" id="PR00160">
    <property type="entry name" value="GLUTAREDOXIN"/>
</dbReference>
<dbReference type="SUPFAM" id="SSF52833">
    <property type="entry name" value="Thioredoxin-like"/>
    <property type="match status" value="1"/>
</dbReference>
<dbReference type="PROSITE" id="PS00195">
    <property type="entry name" value="GLUTAREDOXIN_1"/>
    <property type="match status" value="1"/>
</dbReference>
<dbReference type="PROSITE" id="PS51354">
    <property type="entry name" value="GLUTAREDOXIN_2"/>
    <property type="match status" value="1"/>
</dbReference>
<reference key="1">
    <citation type="journal article" date="1997" name="DNA Res.">
        <title>Structural analysis of Arabidopsis thaliana chromosome 5. II. Sequence features of the regions of 1,044,062 bp covered by thirteen physically assigned P1 clones.</title>
        <authorList>
            <person name="Kotani H."/>
            <person name="Nakamura Y."/>
            <person name="Sato S."/>
            <person name="Kaneko T."/>
            <person name="Asamizu E."/>
            <person name="Miyajima N."/>
            <person name="Tabata S."/>
        </authorList>
    </citation>
    <scope>NUCLEOTIDE SEQUENCE [LARGE SCALE GENOMIC DNA]</scope>
    <source>
        <strain>cv. Columbia</strain>
    </source>
</reference>
<reference key="2">
    <citation type="journal article" date="2017" name="Plant J.">
        <title>Araport11: a complete reannotation of the Arabidopsis thaliana reference genome.</title>
        <authorList>
            <person name="Cheng C.Y."/>
            <person name="Krishnakumar V."/>
            <person name="Chan A.P."/>
            <person name="Thibaud-Nissen F."/>
            <person name="Schobel S."/>
            <person name="Town C.D."/>
        </authorList>
    </citation>
    <scope>GENOME REANNOTATION</scope>
    <source>
        <strain>cv. Columbia</strain>
    </source>
</reference>
<reference key="3">
    <citation type="journal article" date="2003" name="Science">
        <title>Empirical analysis of transcriptional activity in the Arabidopsis genome.</title>
        <authorList>
            <person name="Yamada K."/>
            <person name="Lim J."/>
            <person name="Dale J.M."/>
            <person name="Chen H."/>
            <person name="Shinn P."/>
            <person name="Palm C.J."/>
            <person name="Southwick A.M."/>
            <person name="Wu H.C."/>
            <person name="Kim C.J."/>
            <person name="Nguyen M."/>
            <person name="Pham P.K."/>
            <person name="Cheuk R.F."/>
            <person name="Karlin-Newmann G."/>
            <person name="Liu S.X."/>
            <person name="Lam B."/>
            <person name="Sakano H."/>
            <person name="Wu T."/>
            <person name="Yu G."/>
            <person name="Miranda M."/>
            <person name="Quach H.L."/>
            <person name="Tripp M."/>
            <person name="Chang C.H."/>
            <person name="Lee J.M."/>
            <person name="Toriumi M.J."/>
            <person name="Chan M.M."/>
            <person name="Tang C.C."/>
            <person name="Onodera C.S."/>
            <person name="Deng J.M."/>
            <person name="Akiyama K."/>
            <person name="Ansari Y."/>
            <person name="Arakawa T."/>
            <person name="Banh J."/>
            <person name="Banno F."/>
            <person name="Bowser L."/>
            <person name="Brooks S.Y."/>
            <person name="Carninci P."/>
            <person name="Chao Q."/>
            <person name="Choy N."/>
            <person name="Enju A."/>
            <person name="Goldsmith A.D."/>
            <person name="Gurjal M."/>
            <person name="Hansen N.F."/>
            <person name="Hayashizaki Y."/>
            <person name="Johnson-Hopson C."/>
            <person name="Hsuan V.W."/>
            <person name="Iida K."/>
            <person name="Karnes M."/>
            <person name="Khan S."/>
            <person name="Koesema E."/>
            <person name="Ishida J."/>
            <person name="Jiang P.X."/>
            <person name="Jones T."/>
            <person name="Kawai J."/>
            <person name="Kamiya A."/>
            <person name="Meyers C."/>
            <person name="Nakajima M."/>
            <person name="Narusaka M."/>
            <person name="Seki M."/>
            <person name="Sakurai T."/>
            <person name="Satou M."/>
            <person name="Tamse R."/>
            <person name="Vaysberg M."/>
            <person name="Wallender E.K."/>
            <person name="Wong C."/>
            <person name="Yamamura Y."/>
            <person name="Yuan S."/>
            <person name="Shinozaki K."/>
            <person name="Davis R.W."/>
            <person name="Theologis A."/>
            <person name="Ecker J.R."/>
        </authorList>
    </citation>
    <scope>NUCLEOTIDE SEQUENCE [LARGE SCALE MRNA]</scope>
    <source>
        <strain>cv. Columbia</strain>
    </source>
</reference>
<reference key="4">
    <citation type="submission" date="2002-03" db="EMBL/GenBank/DDBJ databases">
        <title>Full-length cDNA from Arabidopsis thaliana.</title>
        <authorList>
            <person name="Brover V.V."/>
            <person name="Troukhan M.E."/>
            <person name="Alexandrov N.A."/>
            <person name="Lu Y.-P."/>
            <person name="Flavell R.B."/>
            <person name="Feldmann K.A."/>
        </authorList>
    </citation>
    <scope>NUCLEOTIDE SEQUENCE [LARGE SCALE MRNA]</scope>
</reference>
<reference key="5">
    <citation type="journal article" date="2004" name="Cell. Mol. Life Sci.">
        <title>Plant glutaredoxins: still mysterious reducing systems.</title>
        <authorList>
            <person name="Rouhier N."/>
            <person name="Gelhaye E."/>
            <person name="Jacquot J.-P."/>
        </authorList>
    </citation>
    <scope>GENE FAMILY</scope>
    <scope>NOMENCLATURE</scope>
</reference>
<reference key="6">
    <citation type="journal article" date="2006" name="J. Exp. Bot.">
        <title>Genome-wide analysis of plant glutaredoxin systems.</title>
        <authorList>
            <person name="Rouhier N."/>
            <person name="Couturier J."/>
            <person name="Jacquot J.-P."/>
        </authorList>
    </citation>
    <scope>GENE FAMILY</scope>
</reference>
<proteinExistence type="inferred from homology"/>
<feature type="chain" id="PRO_0000268709" description="Glutaredoxin-C2">
    <location>
        <begin position="1"/>
        <end position="111"/>
    </location>
</feature>
<feature type="domain" description="Glutaredoxin" evidence="2">
    <location>
        <begin position="3"/>
        <end position="103"/>
    </location>
</feature>
<feature type="disulfide bond" description="Redox-active" evidence="1">
    <location>
        <begin position="23"/>
        <end position="26"/>
    </location>
</feature>
<organism>
    <name type="scientific">Arabidopsis thaliana</name>
    <name type="common">Mouse-ear cress</name>
    <dbReference type="NCBI Taxonomy" id="3702"/>
    <lineage>
        <taxon>Eukaryota</taxon>
        <taxon>Viridiplantae</taxon>
        <taxon>Streptophyta</taxon>
        <taxon>Embryophyta</taxon>
        <taxon>Tracheophyta</taxon>
        <taxon>Spermatophyta</taxon>
        <taxon>Magnoliopsida</taxon>
        <taxon>eudicotyledons</taxon>
        <taxon>Gunneridae</taxon>
        <taxon>Pentapetalae</taxon>
        <taxon>rosids</taxon>
        <taxon>malvids</taxon>
        <taxon>Brassicales</taxon>
        <taxon>Brassicaceae</taxon>
        <taxon>Camelineae</taxon>
        <taxon>Arabidopsis</taxon>
    </lineage>
</organism>
<keyword id="KW-0025">Alternative splicing</keyword>
<keyword id="KW-0963">Cytoplasm</keyword>
<keyword id="KW-1015">Disulfide bond</keyword>
<keyword id="KW-0249">Electron transport</keyword>
<keyword id="KW-0676">Redox-active center</keyword>
<keyword id="KW-1185">Reference proteome</keyword>
<keyword id="KW-0813">Transport</keyword>
<evidence type="ECO:0000250" key="1"/>
<evidence type="ECO:0000255" key="2">
    <source>
        <dbReference type="PROSITE-ProRule" id="PRU00686"/>
    </source>
</evidence>
<evidence type="ECO:0000305" key="3"/>
<name>GRXC2_ARATH</name>
<sequence length="111" mass="11756">MAMQKAKEIVNSESVVVFSKTYCPYCVRVKELLQQLGAKFKAVELDTESDGSQIQSGLAEWTGQRTVPNVFIGGNHIGGCDATSNLHKDGKLVPLLTEAGAIAGKTATTSA</sequence>
<protein>
    <recommendedName>
        <fullName>Glutaredoxin-C2</fullName>
        <shortName>AtGrxC2</shortName>
    </recommendedName>
</protein>
<accession>Q9FNE2</accession>